<organism>
    <name type="scientific">Salmonella newport (strain SL254)</name>
    <dbReference type="NCBI Taxonomy" id="423368"/>
    <lineage>
        <taxon>Bacteria</taxon>
        <taxon>Pseudomonadati</taxon>
        <taxon>Pseudomonadota</taxon>
        <taxon>Gammaproteobacteria</taxon>
        <taxon>Enterobacterales</taxon>
        <taxon>Enterobacteriaceae</taxon>
        <taxon>Salmonella</taxon>
    </lineage>
</organism>
<accession>B4SZ17</accession>
<feature type="chain" id="PRO_1000089410" description="Dihydroxy-acid dehydratase">
    <location>
        <begin position="1"/>
        <end position="616"/>
    </location>
</feature>
<feature type="active site" description="Proton acceptor" evidence="1">
    <location>
        <position position="517"/>
    </location>
</feature>
<feature type="binding site" evidence="1">
    <location>
        <position position="81"/>
    </location>
    <ligand>
        <name>Mg(2+)</name>
        <dbReference type="ChEBI" id="CHEBI:18420"/>
    </ligand>
</feature>
<feature type="binding site" evidence="1">
    <location>
        <position position="122"/>
    </location>
    <ligand>
        <name>[2Fe-2S] cluster</name>
        <dbReference type="ChEBI" id="CHEBI:190135"/>
    </ligand>
</feature>
<feature type="binding site" evidence="1">
    <location>
        <position position="123"/>
    </location>
    <ligand>
        <name>Mg(2+)</name>
        <dbReference type="ChEBI" id="CHEBI:18420"/>
    </ligand>
</feature>
<feature type="binding site" description="via carbamate group" evidence="1">
    <location>
        <position position="124"/>
    </location>
    <ligand>
        <name>Mg(2+)</name>
        <dbReference type="ChEBI" id="CHEBI:18420"/>
    </ligand>
</feature>
<feature type="binding site" evidence="1">
    <location>
        <position position="195"/>
    </location>
    <ligand>
        <name>[2Fe-2S] cluster</name>
        <dbReference type="ChEBI" id="CHEBI:190135"/>
    </ligand>
</feature>
<feature type="binding site" evidence="1">
    <location>
        <position position="491"/>
    </location>
    <ligand>
        <name>Mg(2+)</name>
        <dbReference type="ChEBI" id="CHEBI:18420"/>
    </ligand>
</feature>
<feature type="modified residue" description="N6-carboxylysine" evidence="1">
    <location>
        <position position="124"/>
    </location>
</feature>
<dbReference type="EC" id="4.2.1.9" evidence="1"/>
<dbReference type="EMBL" id="CP001113">
    <property type="protein sequence ID" value="ACF61753.1"/>
    <property type="molecule type" value="Genomic_DNA"/>
</dbReference>
<dbReference type="RefSeq" id="WP_001127436.1">
    <property type="nucleotide sequence ID" value="NZ_CCMR01000001.1"/>
</dbReference>
<dbReference type="SMR" id="B4SZ17"/>
<dbReference type="KEGG" id="see:SNSL254_A4186"/>
<dbReference type="HOGENOM" id="CLU_014271_4_2_6"/>
<dbReference type="UniPathway" id="UPA00047">
    <property type="reaction ID" value="UER00057"/>
</dbReference>
<dbReference type="UniPathway" id="UPA00049">
    <property type="reaction ID" value="UER00061"/>
</dbReference>
<dbReference type="Proteomes" id="UP000008824">
    <property type="component" value="Chromosome"/>
</dbReference>
<dbReference type="GO" id="GO:0005829">
    <property type="term" value="C:cytosol"/>
    <property type="evidence" value="ECO:0007669"/>
    <property type="project" value="TreeGrafter"/>
</dbReference>
<dbReference type="GO" id="GO:0051537">
    <property type="term" value="F:2 iron, 2 sulfur cluster binding"/>
    <property type="evidence" value="ECO:0007669"/>
    <property type="project" value="UniProtKB-UniRule"/>
</dbReference>
<dbReference type="GO" id="GO:0004160">
    <property type="term" value="F:dihydroxy-acid dehydratase activity"/>
    <property type="evidence" value="ECO:0007669"/>
    <property type="project" value="UniProtKB-UniRule"/>
</dbReference>
<dbReference type="GO" id="GO:0000287">
    <property type="term" value="F:magnesium ion binding"/>
    <property type="evidence" value="ECO:0007669"/>
    <property type="project" value="UniProtKB-UniRule"/>
</dbReference>
<dbReference type="GO" id="GO:0009097">
    <property type="term" value="P:isoleucine biosynthetic process"/>
    <property type="evidence" value="ECO:0007669"/>
    <property type="project" value="UniProtKB-UniRule"/>
</dbReference>
<dbReference type="GO" id="GO:0009099">
    <property type="term" value="P:L-valine biosynthetic process"/>
    <property type="evidence" value="ECO:0007669"/>
    <property type="project" value="UniProtKB-UniRule"/>
</dbReference>
<dbReference type="FunFam" id="3.50.30.80:FF:000001">
    <property type="entry name" value="Dihydroxy-acid dehydratase"/>
    <property type="match status" value="1"/>
</dbReference>
<dbReference type="Gene3D" id="3.50.30.80">
    <property type="entry name" value="IlvD/EDD C-terminal domain-like"/>
    <property type="match status" value="1"/>
</dbReference>
<dbReference type="HAMAP" id="MF_00012">
    <property type="entry name" value="IlvD"/>
    <property type="match status" value="1"/>
</dbReference>
<dbReference type="InterPro" id="IPR042096">
    <property type="entry name" value="Dihydro-acid_dehy_C"/>
</dbReference>
<dbReference type="InterPro" id="IPR004404">
    <property type="entry name" value="DihydroxyA_deHydtase"/>
</dbReference>
<dbReference type="InterPro" id="IPR020558">
    <property type="entry name" value="DiOHA_6PGluconate_deHydtase_CS"/>
</dbReference>
<dbReference type="InterPro" id="IPR056740">
    <property type="entry name" value="ILV_EDD_C"/>
</dbReference>
<dbReference type="InterPro" id="IPR000581">
    <property type="entry name" value="ILV_EDD_N"/>
</dbReference>
<dbReference type="InterPro" id="IPR037237">
    <property type="entry name" value="IlvD/EDD_N"/>
</dbReference>
<dbReference type="NCBIfam" id="TIGR00110">
    <property type="entry name" value="ilvD"/>
    <property type="match status" value="1"/>
</dbReference>
<dbReference type="NCBIfam" id="NF009103">
    <property type="entry name" value="PRK12448.1"/>
    <property type="match status" value="1"/>
</dbReference>
<dbReference type="PANTHER" id="PTHR43661">
    <property type="entry name" value="D-XYLONATE DEHYDRATASE"/>
    <property type="match status" value="1"/>
</dbReference>
<dbReference type="PANTHER" id="PTHR43661:SF3">
    <property type="entry name" value="D-XYLONATE DEHYDRATASE YAGF-RELATED"/>
    <property type="match status" value="1"/>
</dbReference>
<dbReference type="Pfam" id="PF24877">
    <property type="entry name" value="ILV_EDD_C"/>
    <property type="match status" value="1"/>
</dbReference>
<dbReference type="Pfam" id="PF00920">
    <property type="entry name" value="ILVD_EDD_N"/>
    <property type="match status" value="1"/>
</dbReference>
<dbReference type="SUPFAM" id="SSF143975">
    <property type="entry name" value="IlvD/EDD N-terminal domain-like"/>
    <property type="match status" value="1"/>
</dbReference>
<dbReference type="SUPFAM" id="SSF52016">
    <property type="entry name" value="LeuD/IlvD-like"/>
    <property type="match status" value="1"/>
</dbReference>
<dbReference type="PROSITE" id="PS00886">
    <property type="entry name" value="ILVD_EDD_1"/>
    <property type="match status" value="1"/>
</dbReference>
<dbReference type="PROSITE" id="PS00887">
    <property type="entry name" value="ILVD_EDD_2"/>
    <property type="match status" value="1"/>
</dbReference>
<comment type="function">
    <text evidence="1">Functions in the biosynthesis of branched-chain amino acids. Catalyzes the dehydration of (2R,3R)-2,3-dihydroxy-3-methylpentanoate (2,3-dihydroxy-3-methylvalerate) into 2-oxo-3-methylpentanoate (2-oxo-3-methylvalerate) and of (2R)-2,3-dihydroxy-3-methylbutanoate (2,3-dihydroxyisovalerate) into 2-oxo-3-methylbutanoate (2-oxoisovalerate), the penultimate precursor to L-isoleucine and L-valine, respectively.</text>
</comment>
<comment type="catalytic activity">
    <reaction evidence="1">
        <text>(2R)-2,3-dihydroxy-3-methylbutanoate = 3-methyl-2-oxobutanoate + H2O</text>
        <dbReference type="Rhea" id="RHEA:24809"/>
        <dbReference type="ChEBI" id="CHEBI:11851"/>
        <dbReference type="ChEBI" id="CHEBI:15377"/>
        <dbReference type="ChEBI" id="CHEBI:49072"/>
        <dbReference type="EC" id="4.2.1.9"/>
    </reaction>
    <physiologicalReaction direction="left-to-right" evidence="1">
        <dbReference type="Rhea" id="RHEA:24810"/>
    </physiologicalReaction>
</comment>
<comment type="catalytic activity">
    <reaction evidence="1">
        <text>(2R,3R)-2,3-dihydroxy-3-methylpentanoate = (S)-3-methyl-2-oxopentanoate + H2O</text>
        <dbReference type="Rhea" id="RHEA:27694"/>
        <dbReference type="ChEBI" id="CHEBI:15377"/>
        <dbReference type="ChEBI" id="CHEBI:35146"/>
        <dbReference type="ChEBI" id="CHEBI:49258"/>
        <dbReference type="EC" id="4.2.1.9"/>
    </reaction>
    <physiologicalReaction direction="left-to-right" evidence="1">
        <dbReference type="Rhea" id="RHEA:27695"/>
    </physiologicalReaction>
</comment>
<comment type="cofactor">
    <cofactor evidence="1">
        <name>[2Fe-2S] cluster</name>
        <dbReference type="ChEBI" id="CHEBI:190135"/>
    </cofactor>
    <text evidence="1">Binds 1 [2Fe-2S] cluster per subunit. This cluster acts as a Lewis acid cofactor.</text>
</comment>
<comment type="cofactor">
    <cofactor evidence="1">
        <name>Mg(2+)</name>
        <dbReference type="ChEBI" id="CHEBI:18420"/>
    </cofactor>
</comment>
<comment type="pathway">
    <text evidence="1">Amino-acid biosynthesis; L-isoleucine biosynthesis; L-isoleucine from 2-oxobutanoate: step 3/4.</text>
</comment>
<comment type="pathway">
    <text evidence="1">Amino-acid biosynthesis; L-valine biosynthesis; L-valine from pyruvate: step 3/4.</text>
</comment>
<comment type="subunit">
    <text evidence="1">Homodimer.</text>
</comment>
<comment type="similarity">
    <text evidence="1">Belongs to the IlvD/Edd family.</text>
</comment>
<gene>
    <name evidence="1" type="primary">ilvD</name>
    <name type="ordered locus">SNSL254_A4186</name>
</gene>
<keyword id="KW-0001">2Fe-2S</keyword>
<keyword id="KW-0028">Amino-acid biosynthesis</keyword>
<keyword id="KW-0100">Branched-chain amino acid biosynthesis</keyword>
<keyword id="KW-0408">Iron</keyword>
<keyword id="KW-0411">Iron-sulfur</keyword>
<keyword id="KW-0456">Lyase</keyword>
<keyword id="KW-0460">Magnesium</keyword>
<keyword id="KW-0479">Metal-binding</keyword>
<proteinExistence type="inferred from homology"/>
<sequence length="616" mass="65716">MPKYRSATTTHGRNMAGARALWRATGMTDSDFGKPIIAVVNSFTQFVPGHVHLRDLGKLVAEQIEASGGVAKEFNTIAVDDGIAMGHGGMLYSLPSRELIADSVEYMVNAHCADAMVCISNCDKITPGMLMASLRLNIPVIFVSGGPMEAGKTKLSDKIIKLDLVDAMIQGADPKVSDDQSNQVERSACPTCGSCSGMFTANSMNCLTEALGLSQPGNGSLLATHADRKQLFLNAGKRIVELTKRYYEQNDESALPRNIASKAAFENAMTLDIAMGGSTNTVLHLLAAAQEAEIDFTMSDIDKLSRKVPQLCKVAPSTQKYHMEDVHRAGGVLGILGELDRAGLLNRNVKNVLGLTLPQTLEQYDITVTQDEAVKKMFRAGPAGIRTTQAFSQDCRWDSLDDDRAAGCIRSLEYAYSKDGGLAVLYGNFAENGCIVKTAGVDDSILKFTGPAKVYESQDEAVEAILGGKVVEGDVVVIRYEGPKGGPGMQEMLYPTSFLKSMGLGKACALITDGRFSGGTSGLSIGHVSPEAASGGTIALIEDGDTIAIDIPNRSIQLQLSEAEIAARREAQEARGDKAWTPKNRQRQVSFALRAYASLATSADKGAVRDKSKLGG</sequence>
<protein>
    <recommendedName>
        <fullName evidence="1">Dihydroxy-acid dehydratase</fullName>
        <shortName evidence="1">DAD</shortName>
        <ecNumber evidence="1">4.2.1.9</ecNumber>
    </recommendedName>
</protein>
<evidence type="ECO:0000255" key="1">
    <source>
        <dbReference type="HAMAP-Rule" id="MF_00012"/>
    </source>
</evidence>
<name>ILVD_SALNS</name>
<reference key="1">
    <citation type="journal article" date="2011" name="J. Bacteriol.">
        <title>Comparative genomics of 28 Salmonella enterica isolates: evidence for CRISPR-mediated adaptive sublineage evolution.</title>
        <authorList>
            <person name="Fricke W.F."/>
            <person name="Mammel M.K."/>
            <person name="McDermott P.F."/>
            <person name="Tartera C."/>
            <person name="White D.G."/>
            <person name="Leclerc J.E."/>
            <person name="Ravel J."/>
            <person name="Cebula T.A."/>
        </authorList>
    </citation>
    <scope>NUCLEOTIDE SEQUENCE [LARGE SCALE GENOMIC DNA]</scope>
    <source>
        <strain>SL254</strain>
    </source>
</reference>